<feature type="signal peptide" evidence="2">
    <location>
        <begin position="1"/>
        <end position="23"/>
    </location>
</feature>
<feature type="chain" id="PRO_0000106111" description="Non-structural protein 3a">
    <location>
        <begin position="24"/>
        <end position="57"/>
    </location>
</feature>
<reference key="1">
    <citation type="journal article" date="1991" name="Virology">
        <title>A polycistronic mRNA specified by the coronavirus infectious bronchitis virus.</title>
        <authorList>
            <person name="Liu D.X."/>
            <person name="Cavanagh D."/>
            <person name="Green P."/>
            <person name="Inglis S.C."/>
        </authorList>
    </citation>
    <scope>NUCLEOTIDE SEQUENCE [GENOMIC RNA]</scope>
</reference>
<evidence type="ECO:0000250" key="1">
    <source>
        <dbReference type="UniProtKB" id="P30237"/>
    </source>
</evidence>
<evidence type="ECO:0000255" key="2"/>
<name>NS3A_IBVU4</name>
<comment type="function">
    <text evidence="1">Involved in resistance to IFN.</text>
</comment>
<organism>
    <name type="scientific">Avian infectious bronchitis virus (strain UK/68/84)</name>
    <name type="common">IBV</name>
    <dbReference type="NCBI Taxonomy" id="31630"/>
    <lineage>
        <taxon>Viruses</taxon>
        <taxon>Riboviria</taxon>
        <taxon>Orthornavirae</taxon>
        <taxon>Pisuviricota</taxon>
        <taxon>Pisoniviricetes</taxon>
        <taxon>Nidovirales</taxon>
        <taxon>Cornidovirineae</taxon>
        <taxon>Coronaviridae</taxon>
        <taxon>Orthocoronavirinae</taxon>
        <taxon>Gammacoronavirus</taxon>
        <taxon>Igacovirus</taxon>
        <taxon>Avian coronavirus</taxon>
    </lineage>
</organism>
<keyword id="KW-0945">Host-virus interaction</keyword>
<keyword id="KW-1090">Inhibition of host innate immune response by virus</keyword>
<keyword id="KW-0922">Interferon antiviral system evasion</keyword>
<keyword id="KW-0732">Signal</keyword>
<keyword id="KW-0899">Viral immunoevasion</keyword>
<accession>P30239</accession>
<organismHost>
    <name type="scientific">Gallus gallus</name>
    <name type="common">Chicken</name>
    <dbReference type="NCBI Taxonomy" id="9031"/>
</organismHost>
<sequence length="57" mass="6637">MIQSPTSFLIVLVLLWCKLVISCFRECFVALHQLVQVLLQIINSNLQSRLLLWHSLD</sequence>
<protein>
    <recommendedName>
        <fullName>Non-structural protein 3a</fullName>
        <shortName>ns3a</shortName>
    </recommendedName>
    <alternativeName>
        <fullName>Accessory protein 3a</fullName>
    </alternativeName>
</protein>
<proteinExistence type="inferred from homology"/>
<dbReference type="EMBL" id="X60712">
    <property type="protein sequence ID" value="CAA43122.1"/>
    <property type="molecule type" value="Genomic_RNA"/>
</dbReference>
<dbReference type="PIR" id="A36816">
    <property type="entry name" value="WMIH21"/>
</dbReference>
<dbReference type="SMR" id="P30239"/>
<dbReference type="GO" id="GO:0052170">
    <property type="term" value="P:symbiont-mediated suppression of host innate immune response"/>
    <property type="evidence" value="ECO:0007669"/>
    <property type="project" value="UniProtKB-KW"/>
</dbReference>
<dbReference type="InterPro" id="IPR005214">
    <property type="entry name" value="IBV_3A"/>
</dbReference>
<dbReference type="Pfam" id="PF03617">
    <property type="entry name" value="IBV_3A"/>
    <property type="match status" value="1"/>
</dbReference>
<gene>
    <name type="ORF">3a</name>
</gene>